<dbReference type="EMBL" id="CP001338">
    <property type="protein sequence ID" value="ACL15912.1"/>
    <property type="molecule type" value="Genomic_DNA"/>
</dbReference>
<dbReference type="RefSeq" id="WP_012617231.1">
    <property type="nucleotide sequence ID" value="NC_011832.1"/>
</dbReference>
<dbReference type="SMR" id="B8GEU5"/>
<dbReference type="STRING" id="521011.Mpal_0539"/>
<dbReference type="GeneID" id="7271955"/>
<dbReference type="KEGG" id="mpl:Mpal_0539"/>
<dbReference type="eggNOG" id="arCOG04473">
    <property type="taxonomic scope" value="Archaea"/>
</dbReference>
<dbReference type="HOGENOM" id="CLU_112570_3_2_2"/>
<dbReference type="OrthoDB" id="10127at2157"/>
<dbReference type="Proteomes" id="UP000002457">
    <property type="component" value="Chromosome"/>
</dbReference>
<dbReference type="GO" id="GO:0022625">
    <property type="term" value="C:cytosolic large ribosomal subunit"/>
    <property type="evidence" value="ECO:0007669"/>
    <property type="project" value="TreeGrafter"/>
</dbReference>
<dbReference type="GO" id="GO:0003735">
    <property type="term" value="F:structural constituent of ribosome"/>
    <property type="evidence" value="ECO:0007669"/>
    <property type="project" value="InterPro"/>
</dbReference>
<dbReference type="GO" id="GO:0002181">
    <property type="term" value="P:cytoplasmic translation"/>
    <property type="evidence" value="ECO:0007669"/>
    <property type="project" value="TreeGrafter"/>
</dbReference>
<dbReference type="CDD" id="cd00463">
    <property type="entry name" value="Ribosomal_L31e"/>
    <property type="match status" value="1"/>
</dbReference>
<dbReference type="Gene3D" id="3.10.440.10">
    <property type="match status" value="1"/>
</dbReference>
<dbReference type="HAMAP" id="MF_00410">
    <property type="entry name" value="Ribosomal_eL31"/>
    <property type="match status" value="1"/>
</dbReference>
<dbReference type="InterPro" id="IPR000054">
    <property type="entry name" value="Ribosomal_eL31"/>
</dbReference>
<dbReference type="InterPro" id="IPR020052">
    <property type="entry name" value="Ribosomal_eL31_CS"/>
</dbReference>
<dbReference type="InterPro" id="IPR023621">
    <property type="entry name" value="Ribosomal_eL31_dom_sf"/>
</dbReference>
<dbReference type="NCBIfam" id="NF002258">
    <property type="entry name" value="PRK01192.1-1"/>
    <property type="match status" value="1"/>
</dbReference>
<dbReference type="PANTHER" id="PTHR10956">
    <property type="entry name" value="60S RIBOSOMAL PROTEIN L31"/>
    <property type="match status" value="1"/>
</dbReference>
<dbReference type="PANTHER" id="PTHR10956:SF0">
    <property type="entry name" value="60S RIBOSOMAL PROTEIN L31"/>
    <property type="match status" value="1"/>
</dbReference>
<dbReference type="Pfam" id="PF01198">
    <property type="entry name" value="Ribosomal_L31e"/>
    <property type="match status" value="1"/>
</dbReference>
<dbReference type="SMART" id="SM01380">
    <property type="entry name" value="Ribosomal_L31e"/>
    <property type="match status" value="1"/>
</dbReference>
<dbReference type="SUPFAM" id="SSF54575">
    <property type="entry name" value="Ribosomal protein L31e"/>
    <property type="match status" value="1"/>
</dbReference>
<dbReference type="PROSITE" id="PS01144">
    <property type="entry name" value="RIBOSOMAL_L31E"/>
    <property type="match status" value="1"/>
</dbReference>
<protein>
    <recommendedName>
        <fullName evidence="1">Large ribosomal subunit protein eL31</fullName>
    </recommendedName>
    <alternativeName>
        <fullName evidence="2">50S ribosomal protein L31e</fullName>
    </alternativeName>
</protein>
<evidence type="ECO:0000255" key="1">
    <source>
        <dbReference type="HAMAP-Rule" id="MF_00410"/>
    </source>
</evidence>
<evidence type="ECO:0000305" key="2"/>
<reference key="1">
    <citation type="journal article" date="2015" name="Genome Announc.">
        <title>Complete Genome Sequence of Methanosphaerula palustris E1-9CT, a Hydrogenotrophic Methanogen Isolated from a Minerotrophic Fen Peatland.</title>
        <authorList>
            <person name="Cadillo-Quiroz H."/>
            <person name="Browne P."/>
            <person name="Kyrpides N."/>
            <person name="Woyke T."/>
            <person name="Goodwin L."/>
            <person name="Detter C."/>
            <person name="Yavitt J.B."/>
            <person name="Zinder S.H."/>
        </authorList>
    </citation>
    <scope>NUCLEOTIDE SEQUENCE [LARGE SCALE GENOMIC DNA]</scope>
    <source>
        <strain>ATCC BAA-1556 / DSM 19958 / E1-9c</strain>
    </source>
</reference>
<feature type="chain" id="PRO_1000134758" description="Large ribosomal subunit protein eL31">
    <location>
        <begin position="1"/>
        <end position="87"/>
    </location>
</feature>
<organism>
    <name type="scientific">Methanosphaerula palustris (strain ATCC BAA-1556 / DSM 19958 / E1-9c)</name>
    <dbReference type="NCBI Taxonomy" id="521011"/>
    <lineage>
        <taxon>Archaea</taxon>
        <taxon>Methanobacteriati</taxon>
        <taxon>Methanobacteriota</taxon>
        <taxon>Stenosarchaea group</taxon>
        <taxon>Methanomicrobia</taxon>
        <taxon>Methanomicrobiales</taxon>
        <taxon>Methanoregulaceae</taxon>
        <taxon>Methanosphaerula</taxon>
    </lineage>
</organism>
<gene>
    <name evidence="1" type="primary">rpl31e</name>
    <name type="ordered locus">Mpal_0539</name>
</gene>
<sequence length="87" mass="10298">MVEKMNEQIYIIPLRDVKRSPRWKRSNTAMKDIRAFLAKHMKSEDVKLDASINEKVWERGSEKPPRKIRVRAMKFDDGQVQAELAQE</sequence>
<proteinExistence type="inferred from homology"/>
<keyword id="KW-1185">Reference proteome</keyword>
<keyword id="KW-0687">Ribonucleoprotein</keyword>
<keyword id="KW-0689">Ribosomal protein</keyword>
<accession>B8GEU5</accession>
<comment type="similarity">
    <text evidence="1">Belongs to the eukaryotic ribosomal protein eL31 family.</text>
</comment>
<name>RL31_METPE</name>